<gene>
    <name evidence="1" type="primary">mdm12</name>
    <name type="ORF">An01g12820</name>
</gene>
<reference key="1">
    <citation type="journal article" date="2007" name="Nat. Biotechnol.">
        <title>Genome sequencing and analysis of the versatile cell factory Aspergillus niger CBS 513.88.</title>
        <authorList>
            <person name="Pel H.J."/>
            <person name="de Winde J.H."/>
            <person name="Archer D.B."/>
            <person name="Dyer P.S."/>
            <person name="Hofmann G."/>
            <person name="Schaap P.J."/>
            <person name="Turner G."/>
            <person name="de Vries R.P."/>
            <person name="Albang R."/>
            <person name="Albermann K."/>
            <person name="Andersen M.R."/>
            <person name="Bendtsen J.D."/>
            <person name="Benen J.A.E."/>
            <person name="van den Berg M."/>
            <person name="Breestraat S."/>
            <person name="Caddick M.X."/>
            <person name="Contreras R."/>
            <person name="Cornell M."/>
            <person name="Coutinho P.M."/>
            <person name="Danchin E.G.J."/>
            <person name="Debets A.J.M."/>
            <person name="Dekker P."/>
            <person name="van Dijck P.W.M."/>
            <person name="van Dijk A."/>
            <person name="Dijkhuizen L."/>
            <person name="Driessen A.J.M."/>
            <person name="d'Enfert C."/>
            <person name="Geysens S."/>
            <person name="Goosen C."/>
            <person name="Groot G.S.P."/>
            <person name="de Groot P.W.J."/>
            <person name="Guillemette T."/>
            <person name="Henrissat B."/>
            <person name="Herweijer M."/>
            <person name="van den Hombergh J.P.T.W."/>
            <person name="van den Hondel C.A.M.J.J."/>
            <person name="van der Heijden R.T.J.M."/>
            <person name="van der Kaaij R.M."/>
            <person name="Klis F.M."/>
            <person name="Kools H.J."/>
            <person name="Kubicek C.P."/>
            <person name="van Kuyk P.A."/>
            <person name="Lauber J."/>
            <person name="Lu X."/>
            <person name="van der Maarel M.J.E.C."/>
            <person name="Meulenberg R."/>
            <person name="Menke H."/>
            <person name="Mortimer M.A."/>
            <person name="Nielsen J."/>
            <person name="Oliver S.G."/>
            <person name="Olsthoorn M."/>
            <person name="Pal K."/>
            <person name="van Peij N.N.M.E."/>
            <person name="Ram A.F.J."/>
            <person name="Rinas U."/>
            <person name="Roubos J.A."/>
            <person name="Sagt C.M.J."/>
            <person name="Schmoll M."/>
            <person name="Sun J."/>
            <person name="Ussery D."/>
            <person name="Varga J."/>
            <person name="Vervecken W."/>
            <person name="van de Vondervoort P.J.J."/>
            <person name="Wedler H."/>
            <person name="Woesten H.A.B."/>
            <person name="Zeng A.-P."/>
            <person name="van Ooyen A.J.J."/>
            <person name="Visser J."/>
            <person name="Stam H."/>
        </authorList>
    </citation>
    <scope>NUCLEOTIDE SEQUENCE [LARGE SCALE GENOMIC DNA]</scope>
    <source>
        <strain>ATCC MYA-4892 / CBS 513.88 / FGSC A1513</strain>
    </source>
</reference>
<keyword id="KW-0256">Endoplasmic reticulum</keyword>
<keyword id="KW-0445">Lipid transport</keyword>
<keyword id="KW-0446">Lipid-binding</keyword>
<keyword id="KW-0472">Membrane</keyword>
<keyword id="KW-0496">Mitochondrion</keyword>
<keyword id="KW-1000">Mitochondrion outer membrane</keyword>
<keyword id="KW-1185">Reference proteome</keyword>
<keyword id="KW-0813">Transport</keyword>
<feature type="chain" id="PRO_0000384272" description="Mitochondrial distribution and morphology protein 12">
    <location>
        <begin position="1"/>
        <end position="435"/>
    </location>
</feature>
<feature type="domain" description="SMP-LTD" evidence="1">
    <location>
        <begin position="1"/>
        <end position="435"/>
    </location>
</feature>
<feature type="region of interest" description="Disordered" evidence="2">
    <location>
        <begin position="73"/>
        <end position="113"/>
    </location>
</feature>
<feature type="region of interest" description="Disordered" evidence="2">
    <location>
        <begin position="186"/>
        <end position="268"/>
    </location>
</feature>
<feature type="compositionally biased region" description="Basic and acidic residues" evidence="2">
    <location>
        <begin position="96"/>
        <end position="113"/>
    </location>
</feature>
<feature type="compositionally biased region" description="Low complexity" evidence="2">
    <location>
        <begin position="218"/>
        <end position="238"/>
    </location>
</feature>
<feature type="compositionally biased region" description="Basic and acidic residues" evidence="2">
    <location>
        <begin position="251"/>
        <end position="268"/>
    </location>
</feature>
<protein>
    <recommendedName>
        <fullName evidence="1">Mitochondrial distribution and morphology protein 12</fullName>
    </recommendedName>
    <alternativeName>
        <fullName evidence="1">Mitochondrial inheritance component MDM12</fullName>
    </alternativeName>
</protein>
<organism>
    <name type="scientific">Aspergillus niger (strain ATCC MYA-4892 / CBS 513.88 / FGSC A1513)</name>
    <dbReference type="NCBI Taxonomy" id="425011"/>
    <lineage>
        <taxon>Eukaryota</taxon>
        <taxon>Fungi</taxon>
        <taxon>Dikarya</taxon>
        <taxon>Ascomycota</taxon>
        <taxon>Pezizomycotina</taxon>
        <taxon>Eurotiomycetes</taxon>
        <taxon>Eurotiomycetidae</taxon>
        <taxon>Eurotiales</taxon>
        <taxon>Aspergillaceae</taxon>
        <taxon>Aspergillus</taxon>
        <taxon>Aspergillus subgen. Circumdati</taxon>
    </lineage>
</organism>
<evidence type="ECO:0000255" key="1">
    <source>
        <dbReference type="HAMAP-Rule" id="MF_03104"/>
    </source>
</evidence>
<evidence type="ECO:0000256" key="2">
    <source>
        <dbReference type="SAM" id="MobiDB-lite"/>
    </source>
</evidence>
<dbReference type="EMBL" id="AM269986">
    <property type="protein sequence ID" value="CAK37332.1"/>
    <property type="molecule type" value="Genomic_DNA"/>
</dbReference>
<dbReference type="RefSeq" id="XP_001389687.1">
    <property type="nucleotide sequence ID" value="XM_001389650.2"/>
</dbReference>
<dbReference type="SMR" id="A2QAU8"/>
<dbReference type="EnsemblFungi" id="CAK37332">
    <property type="protein sequence ID" value="CAK37332"/>
    <property type="gene ID" value="An01g12820"/>
</dbReference>
<dbReference type="GeneID" id="4977585"/>
<dbReference type="KEGG" id="ang:An01g12820"/>
<dbReference type="VEuPathDB" id="FungiDB:An01g12820"/>
<dbReference type="HOGENOM" id="CLU_026794_0_0_1"/>
<dbReference type="Proteomes" id="UP000006706">
    <property type="component" value="Chromosome 2R"/>
</dbReference>
<dbReference type="GO" id="GO:0005789">
    <property type="term" value="C:endoplasmic reticulum membrane"/>
    <property type="evidence" value="ECO:0007669"/>
    <property type="project" value="UniProtKB-SubCell"/>
</dbReference>
<dbReference type="GO" id="GO:0032865">
    <property type="term" value="C:ERMES complex"/>
    <property type="evidence" value="ECO:0007669"/>
    <property type="project" value="UniProtKB-UniRule"/>
</dbReference>
<dbReference type="GO" id="GO:0008289">
    <property type="term" value="F:lipid binding"/>
    <property type="evidence" value="ECO:0007669"/>
    <property type="project" value="UniProtKB-KW"/>
</dbReference>
<dbReference type="GO" id="GO:0000002">
    <property type="term" value="P:mitochondrial genome maintenance"/>
    <property type="evidence" value="ECO:0007669"/>
    <property type="project" value="UniProtKB-UniRule"/>
</dbReference>
<dbReference type="GO" id="GO:1990456">
    <property type="term" value="P:mitochondrion-endoplasmic reticulum membrane tethering"/>
    <property type="evidence" value="ECO:0007669"/>
    <property type="project" value="TreeGrafter"/>
</dbReference>
<dbReference type="GO" id="GO:0015914">
    <property type="term" value="P:phospholipid transport"/>
    <property type="evidence" value="ECO:0007669"/>
    <property type="project" value="TreeGrafter"/>
</dbReference>
<dbReference type="GO" id="GO:0045040">
    <property type="term" value="P:protein insertion into mitochondrial outer membrane"/>
    <property type="evidence" value="ECO:0007669"/>
    <property type="project" value="UniProtKB-UniRule"/>
</dbReference>
<dbReference type="CDD" id="cd21672">
    <property type="entry name" value="SMP_Mdm12"/>
    <property type="match status" value="1"/>
</dbReference>
<dbReference type="HAMAP" id="MF_03104">
    <property type="entry name" value="Mdm12"/>
    <property type="match status" value="1"/>
</dbReference>
<dbReference type="InterPro" id="IPR027532">
    <property type="entry name" value="Mdm12"/>
</dbReference>
<dbReference type="InterPro" id="IPR019411">
    <property type="entry name" value="MMM1_dom"/>
</dbReference>
<dbReference type="InterPro" id="IPR031468">
    <property type="entry name" value="SMP_LBD"/>
</dbReference>
<dbReference type="PANTHER" id="PTHR28204">
    <property type="entry name" value="MITOCHONDRIAL DISTRIBUTION AND MORPHOLOGY PROTEIN 12"/>
    <property type="match status" value="1"/>
</dbReference>
<dbReference type="PANTHER" id="PTHR28204:SF1">
    <property type="entry name" value="MITOCHONDRIAL DISTRIBUTION AND MORPHOLOGY PROTEIN 12"/>
    <property type="match status" value="1"/>
</dbReference>
<dbReference type="Pfam" id="PF10296">
    <property type="entry name" value="MMM1"/>
    <property type="match status" value="1"/>
</dbReference>
<dbReference type="PROSITE" id="PS51847">
    <property type="entry name" value="SMP"/>
    <property type="match status" value="1"/>
</dbReference>
<accession>A2QAU8</accession>
<name>MDM12_ASPNC</name>
<proteinExistence type="inferred from homology"/>
<sequence>MSIEVDWGAATSGPDGEALAERIRSFIHDKFQQVALPRFIRSVQVHSFDFGTIPPELEIKDLCEPFADFYEEDEDDEASDVSEGLVSRHGSPWHGTHPELNESSFRDDNAINHSLRDPFTEGFQPSALRSPIALSDHLNPHFRSGTPGIPGGTSTLGYHLMSLGGLSGTQTPLAAVAGGSPFAGGWNDSGMMGPGNRGRPPPPIFTAHQSRPEADIDSSNPTSRPSTSSTLPSHPSGSNKNNGDGAGGPDHGSHPEEHGHLDDPTSEEPLRFPRMRERRPEDFQVLCHAKYAGDVRLSLTAEILLDYPMPSFVGLPLKLNVTGITFDGVAVVAYIRKRVHFCFLSSEDADALIGSDQPDVGAQTEYSRSGGDATVSAKRQGGLLQEIRVESEIGRKEDGKQVLKNVGKVERFVLAQVRRIFEEELVYPSFWTFLV</sequence>
<comment type="function">
    <text evidence="1">Component of the ERMES/MDM complex, which serves as a molecular tether to connect the endoplasmic reticulum (ER) and mitochondria. Components of this complex are involved in the control of mitochondrial shape and protein biogenesis, and function in nonvesicular lipid trafficking between the ER and mitochondria. Mdm12 is required for the interaction of the ER-resident membrane protein mmm1 and the outer mitochondrial membrane-resident beta-barrel protein mdm10. The mdm12-mmm1 subcomplex functions in the major beta-barrel assembly pathway that is responsible for biogenesis of all mitochondrial outer membrane beta-barrel proteins, and acts in a late step after the SAM complex. The mdm10-mdm12-mmm1 subcomplex further acts in the TOM40-specific pathway after the action of the mdm12-mmm1 complex. Essential for establishing and maintaining the structure of mitochondria and maintenance of mtDNA nucleoids.</text>
</comment>
<comment type="subunit">
    <text evidence="1">Component of the ER-mitochondria encounter structure (ERMES) or MDM complex, composed of mmm1, mdm10, mdm12 and mdm34. A mmm1 homodimer associates with one molecule of mdm12 on each side in a pairwise head-to-tail manner, and the SMP-LTD domains of mmm1 and mdm12 generate a continuous hydrophobic tunnel for phospholipid trafficking.</text>
</comment>
<comment type="subcellular location">
    <subcellularLocation>
        <location evidence="1">Mitochondrion outer membrane</location>
        <topology evidence="1">Peripheral membrane protein</topology>
        <orientation evidence="1">Cytoplasmic side</orientation>
    </subcellularLocation>
    <subcellularLocation>
        <location evidence="1">Endoplasmic reticulum membrane</location>
        <topology evidence="1">Peripheral membrane protein</topology>
        <orientation evidence="1">Cytoplasmic side</orientation>
    </subcellularLocation>
    <text evidence="1">The ERMES/MDM complex localizes to a few discrete foci (around 10 per single cell), that represent mitochondria-endoplasmic reticulum junctions. These foci are often found next to mtDNA nucleoids.</text>
</comment>
<comment type="domain">
    <text evidence="1">The SMP-LTD domain is a barrel-like domain that can bind various types of glycerophospholipids in its interior and mediate their transfer between two adjacent bilayers.</text>
</comment>
<comment type="similarity">
    <text evidence="1">Belongs to the MDM12 family.</text>
</comment>